<dbReference type="EC" id="3.1.1.29" evidence="1"/>
<dbReference type="EMBL" id="CP000001">
    <property type="protein sequence ID" value="AAU20183.1"/>
    <property type="molecule type" value="Genomic_DNA"/>
</dbReference>
<dbReference type="RefSeq" id="WP_001979768.1">
    <property type="nucleotide sequence ID" value="NZ_CP009968.1"/>
</dbReference>
<dbReference type="SMR" id="Q63HI2"/>
<dbReference type="GeneID" id="75083315"/>
<dbReference type="KEGG" id="bcz:BCE33L0046"/>
<dbReference type="PATRIC" id="fig|288681.22.peg.107"/>
<dbReference type="Proteomes" id="UP000002612">
    <property type="component" value="Chromosome"/>
</dbReference>
<dbReference type="GO" id="GO:0005737">
    <property type="term" value="C:cytoplasm"/>
    <property type="evidence" value="ECO:0007669"/>
    <property type="project" value="UniProtKB-SubCell"/>
</dbReference>
<dbReference type="GO" id="GO:0004045">
    <property type="term" value="F:peptidyl-tRNA hydrolase activity"/>
    <property type="evidence" value="ECO:0007669"/>
    <property type="project" value="UniProtKB-UniRule"/>
</dbReference>
<dbReference type="GO" id="GO:0000049">
    <property type="term" value="F:tRNA binding"/>
    <property type="evidence" value="ECO:0007669"/>
    <property type="project" value="UniProtKB-UniRule"/>
</dbReference>
<dbReference type="GO" id="GO:0006515">
    <property type="term" value="P:protein quality control for misfolded or incompletely synthesized proteins"/>
    <property type="evidence" value="ECO:0007669"/>
    <property type="project" value="UniProtKB-UniRule"/>
</dbReference>
<dbReference type="GO" id="GO:0072344">
    <property type="term" value="P:rescue of stalled ribosome"/>
    <property type="evidence" value="ECO:0007669"/>
    <property type="project" value="UniProtKB-UniRule"/>
</dbReference>
<dbReference type="CDD" id="cd00462">
    <property type="entry name" value="PTH"/>
    <property type="match status" value="1"/>
</dbReference>
<dbReference type="FunFam" id="3.40.50.1470:FF:000001">
    <property type="entry name" value="Peptidyl-tRNA hydrolase"/>
    <property type="match status" value="1"/>
</dbReference>
<dbReference type="Gene3D" id="3.40.50.1470">
    <property type="entry name" value="Peptidyl-tRNA hydrolase"/>
    <property type="match status" value="1"/>
</dbReference>
<dbReference type="HAMAP" id="MF_00083">
    <property type="entry name" value="Pept_tRNA_hydro_bact"/>
    <property type="match status" value="1"/>
</dbReference>
<dbReference type="InterPro" id="IPR001328">
    <property type="entry name" value="Pept_tRNA_hydro"/>
</dbReference>
<dbReference type="InterPro" id="IPR018171">
    <property type="entry name" value="Pept_tRNA_hydro_CS"/>
</dbReference>
<dbReference type="InterPro" id="IPR036416">
    <property type="entry name" value="Pept_tRNA_hydro_sf"/>
</dbReference>
<dbReference type="NCBIfam" id="TIGR00447">
    <property type="entry name" value="pth"/>
    <property type="match status" value="1"/>
</dbReference>
<dbReference type="PANTHER" id="PTHR17224">
    <property type="entry name" value="PEPTIDYL-TRNA HYDROLASE"/>
    <property type="match status" value="1"/>
</dbReference>
<dbReference type="PANTHER" id="PTHR17224:SF1">
    <property type="entry name" value="PEPTIDYL-TRNA HYDROLASE"/>
    <property type="match status" value="1"/>
</dbReference>
<dbReference type="Pfam" id="PF01195">
    <property type="entry name" value="Pept_tRNA_hydro"/>
    <property type="match status" value="1"/>
</dbReference>
<dbReference type="SUPFAM" id="SSF53178">
    <property type="entry name" value="Peptidyl-tRNA hydrolase-like"/>
    <property type="match status" value="1"/>
</dbReference>
<dbReference type="PROSITE" id="PS01195">
    <property type="entry name" value="PEPT_TRNA_HYDROL_1"/>
    <property type="match status" value="1"/>
</dbReference>
<dbReference type="PROSITE" id="PS01196">
    <property type="entry name" value="PEPT_TRNA_HYDROL_2"/>
    <property type="match status" value="1"/>
</dbReference>
<organism>
    <name type="scientific">Bacillus cereus (strain ZK / E33L)</name>
    <dbReference type="NCBI Taxonomy" id="288681"/>
    <lineage>
        <taxon>Bacteria</taxon>
        <taxon>Bacillati</taxon>
        <taxon>Bacillota</taxon>
        <taxon>Bacilli</taxon>
        <taxon>Bacillales</taxon>
        <taxon>Bacillaceae</taxon>
        <taxon>Bacillus</taxon>
        <taxon>Bacillus cereus group</taxon>
    </lineage>
</organism>
<comment type="function">
    <text evidence="1">Hydrolyzes ribosome-free peptidyl-tRNAs (with 1 or more amino acids incorporated), which drop off the ribosome during protein synthesis, or as a result of ribosome stalling.</text>
</comment>
<comment type="function">
    <text evidence="1">Catalyzes the release of premature peptidyl moieties from peptidyl-tRNA molecules trapped in stalled 50S ribosomal subunits, and thus maintains levels of free tRNAs and 50S ribosomes.</text>
</comment>
<comment type="catalytic activity">
    <reaction evidence="1">
        <text>an N-acyl-L-alpha-aminoacyl-tRNA + H2O = an N-acyl-L-amino acid + a tRNA + H(+)</text>
        <dbReference type="Rhea" id="RHEA:54448"/>
        <dbReference type="Rhea" id="RHEA-COMP:10123"/>
        <dbReference type="Rhea" id="RHEA-COMP:13883"/>
        <dbReference type="ChEBI" id="CHEBI:15377"/>
        <dbReference type="ChEBI" id="CHEBI:15378"/>
        <dbReference type="ChEBI" id="CHEBI:59874"/>
        <dbReference type="ChEBI" id="CHEBI:78442"/>
        <dbReference type="ChEBI" id="CHEBI:138191"/>
        <dbReference type="EC" id="3.1.1.29"/>
    </reaction>
</comment>
<comment type="subunit">
    <text evidence="1">Monomer.</text>
</comment>
<comment type="subcellular location">
    <subcellularLocation>
        <location evidence="1">Cytoplasm</location>
    </subcellularLocation>
</comment>
<comment type="similarity">
    <text evidence="1">Belongs to the PTH family.</text>
</comment>
<evidence type="ECO:0000255" key="1">
    <source>
        <dbReference type="HAMAP-Rule" id="MF_00083"/>
    </source>
</evidence>
<name>PTH_BACCZ</name>
<protein>
    <recommendedName>
        <fullName evidence="1">Peptidyl-tRNA hydrolase</fullName>
        <shortName evidence="1">Pth</shortName>
        <ecNumber evidence="1">3.1.1.29</ecNumber>
    </recommendedName>
</protein>
<gene>
    <name evidence="1" type="primary">pth</name>
    <name type="synonym">spoVC</name>
    <name type="ordered locus">BCE33L0046</name>
</gene>
<proteinExistence type="inferred from homology"/>
<feature type="chain" id="PRO_0000187686" description="Peptidyl-tRNA hydrolase">
    <location>
        <begin position="1"/>
        <end position="186"/>
    </location>
</feature>
<feature type="active site" description="Proton acceptor" evidence="1">
    <location>
        <position position="19"/>
    </location>
</feature>
<feature type="binding site" evidence="1">
    <location>
        <position position="14"/>
    </location>
    <ligand>
        <name>tRNA</name>
        <dbReference type="ChEBI" id="CHEBI:17843"/>
    </ligand>
</feature>
<feature type="binding site" evidence="1">
    <location>
        <position position="64"/>
    </location>
    <ligand>
        <name>tRNA</name>
        <dbReference type="ChEBI" id="CHEBI:17843"/>
    </ligand>
</feature>
<feature type="binding site" evidence="1">
    <location>
        <position position="66"/>
    </location>
    <ligand>
        <name>tRNA</name>
        <dbReference type="ChEBI" id="CHEBI:17843"/>
    </ligand>
</feature>
<feature type="binding site" evidence="1">
    <location>
        <position position="112"/>
    </location>
    <ligand>
        <name>tRNA</name>
        <dbReference type="ChEBI" id="CHEBI:17843"/>
    </ligand>
</feature>
<feature type="site" description="Discriminates between blocked and unblocked aminoacyl-tRNA" evidence="1">
    <location>
        <position position="9"/>
    </location>
</feature>
<feature type="site" description="Stabilizes the basic form of H active site to accept a proton" evidence="1">
    <location>
        <position position="91"/>
    </location>
</feature>
<reference key="1">
    <citation type="journal article" date="2006" name="J. Bacteriol.">
        <title>Pathogenomic sequence analysis of Bacillus cereus and Bacillus thuringiensis isolates closely related to Bacillus anthracis.</title>
        <authorList>
            <person name="Han C.S."/>
            <person name="Xie G."/>
            <person name="Challacombe J.F."/>
            <person name="Altherr M.R."/>
            <person name="Bhotika S.S."/>
            <person name="Bruce D."/>
            <person name="Campbell C.S."/>
            <person name="Campbell M.L."/>
            <person name="Chen J."/>
            <person name="Chertkov O."/>
            <person name="Cleland C."/>
            <person name="Dimitrijevic M."/>
            <person name="Doggett N.A."/>
            <person name="Fawcett J.J."/>
            <person name="Glavina T."/>
            <person name="Goodwin L.A."/>
            <person name="Hill K.K."/>
            <person name="Hitchcock P."/>
            <person name="Jackson P.J."/>
            <person name="Keim P."/>
            <person name="Kewalramani A.R."/>
            <person name="Longmire J."/>
            <person name="Lucas S."/>
            <person name="Malfatti S."/>
            <person name="McMurry K."/>
            <person name="Meincke L.J."/>
            <person name="Misra M."/>
            <person name="Moseman B.L."/>
            <person name="Mundt M."/>
            <person name="Munk A.C."/>
            <person name="Okinaka R.T."/>
            <person name="Parson-Quintana B."/>
            <person name="Reilly L.P."/>
            <person name="Richardson P."/>
            <person name="Robinson D.L."/>
            <person name="Rubin E."/>
            <person name="Saunders E."/>
            <person name="Tapia R."/>
            <person name="Tesmer J.G."/>
            <person name="Thayer N."/>
            <person name="Thompson L.S."/>
            <person name="Tice H."/>
            <person name="Ticknor L.O."/>
            <person name="Wills P.L."/>
            <person name="Brettin T.S."/>
            <person name="Gilna P."/>
        </authorList>
    </citation>
    <scope>NUCLEOTIDE SEQUENCE [LARGE SCALE GENOMIC DNA]</scope>
    <source>
        <strain>ZK / E33L</strain>
    </source>
</reference>
<sequence length="186" mass="21082">MKLIVGLGNPGREYELTRHNIGFMAIDELAKRWNISLNEQKFKGVFGAGFVNGEKVILLKPLTYMNLSGESIRPLMDYYKIDVEDFVVLYDDLDIPVGKLRLRMKGSAGGHNGVKSTISHLGTQEFQRIRMGIDRPKNGMKVVDYVLGRFTSEEIPDVNHSIEKAADACEEWLNKPFLQIMNTFNS</sequence>
<keyword id="KW-0963">Cytoplasm</keyword>
<keyword id="KW-0378">Hydrolase</keyword>
<keyword id="KW-0694">RNA-binding</keyword>
<keyword id="KW-0820">tRNA-binding</keyword>
<accession>Q63HI2</accession>